<sequence>MSKAIIKFVRLSPTKARLIAREVQGMNAELALASLQFMPNRGAKFIANAISSAVANGGFEPEEVVVSSCRVDAGPVLKRFRPRARGTASKIRKPTSHVMVEVSKAQKKEA</sequence>
<reference key="1">
    <citation type="submission" date="2007-07" db="EMBL/GenBank/DDBJ databases">
        <title>Genome sequence of Campylobacter curvus 525.92 isolated from human feces.</title>
        <authorList>
            <person name="Fouts D.E."/>
            <person name="Mongodin E.F."/>
            <person name="Puiu D."/>
            <person name="Sebastian Y."/>
            <person name="Miller W.G."/>
            <person name="Mandrell R.E."/>
            <person name="Lastovica A.J."/>
            <person name="Nelson K.E."/>
        </authorList>
    </citation>
    <scope>NUCLEOTIDE SEQUENCE [LARGE SCALE GENOMIC DNA]</scope>
    <source>
        <strain>525.92</strain>
    </source>
</reference>
<evidence type="ECO:0000255" key="1">
    <source>
        <dbReference type="HAMAP-Rule" id="MF_01331"/>
    </source>
</evidence>
<evidence type="ECO:0000256" key="2">
    <source>
        <dbReference type="SAM" id="MobiDB-lite"/>
    </source>
</evidence>
<evidence type="ECO:0000305" key="3"/>
<dbReference type="EMBL" id="CP000767">
    <property type="protein sequence ID" value="EAT99620.1"/>
    <property type="molecule type" value="Genomic_DNA"/>
</dbReference>
<dbReference type="RefSeq" id="WP_011992852.1">
    <property type="nucleotide sequence ID" value="NC_009715.2"/>
</dbReference>
<dbReference type="SMR" id="A7H107"/>
<dbReference type="STRING" id="360105.CCV52592_1028"/>
<dbReference type="GeneID" id="61003093"/>
<dbReference type="KEGG" id="ccv:CCV52592_1028"/>
<dbReference type="HOGENOM" id="CLU_083987_3_2_7"/>
<dbReference type="OrthoDB" id="9805969at2"/>
<dbReference type="Proteomes" id="UP000006380">
    <property type="component" value="Chromosome"/>
</dbReference>
<dbReference type="GO" id="GO:0022625">
    <property type="term" value="C:cytosolic large ribosomal subunit"/>
    <property type="evidence" value="ECO:0007669"/>
    <property type="project" value="TreeGrafter"/>
</dbReference>
<dbReference type="GO" id="GO:0019843">
    <property type="term" value="F:rRNA binding"/>
    <property type="evidence" value="ECO:0007669"/>
    <property type="project" value="UniProtKB-UniRule"/>
</dbReference>
<dbReference type="GO" id="GO:0003735">
    <property type="term" value="F:structural constituent of ribosome"/>
    <property type="evidence" value="ECO:0007669"/>
    <property type="project" value="InterPro"/>
</dbReference>
<dbReference type="GO" id="GO:0006412">
    <property type="term" value="P:translation"/>
    <property type="evidence" value="ECO:0007669"/>
    <property type="project" value="UniProtKB-UniRule"/>
</dbReference>
<dbReference type="CDD" id="cd00336">
    <property type="entry name" value="Ribosomal_L22"/>
    <property type="match status" value="1"/>
</dbReference>
<dbReference type="Gene3D" id="3.90.470.10">
    <property type="entry name" value="Ribosomal protein L22/L17"/>
    <property type="match status" value="1"/>
</dbReference>
<dbReference type="HAMAP" id="MF_01331_B">
    <property type="entry name" value="Ribosomal_uL22_B"/>
    <property type="match status" value="1"/>
</dbReference>
<dbReference type="InterPro" id="IPR001063">
    <property type="entry name" value="Ribosomal_uL22"/>
</dbReference>
<dbReference type="InterPro" id="IPR005727">
    <property type="entry name" value="Ribosomal_uL22_bac/chlpt-type"/>
</dbReference>
<dbReference type="InterPro" id="IPR047867">
    <property type="entry name" value="Ribosomal_uL22_bac/org-type"/>
</dbReference>
<dbReference type="InterPro" id="IPR036394">
    <property type="entry name" value="Ribosomal_uL22_sf"/>
</dbReference>
<dbReference type="NCBIfam" id="TIGR01044">
    <property type="entry name" value="rplV_bact"/>
    <property type="match status" value="1"/>
</dbReference>
<dbReference type="PANTHER" id="PTHR13501">
    <property type="entry name" value="CHLOROPLAST 50S RIBOSOMAL PROTEIN L22-RELATED"/>
    <property type="match status" value="1"/>
</dbReference>
<dbReference type="PANTHER" id="PTHR13501:SF8">
    <property type="entry name" value="LARGE RIBOSOMAL SUBUNIT PROTEIN UL22M"/>
    <property type="match status" value="1"/>
</dbReference>
<dbReference type="Pfam" id="PF00237">
    <property type="entry name" value="Ribosomal_L22"/>
    <property type="match status" value="1"/>
</dbReference>
<dbReference type="SUPFAM" id="SSF54843">
    <property type="entry name" value="Ribosomal protein L22"/>
    <property type="match status" value="1"/>
</dbReference>
<accession>A7H107</accession>
<organism>
    <name type="scientific">Campylobacter curvus (strain 525.92)</name>
    <dbReference type="NCBI Taxonomy" id="360105"/>
    <lineage>
        <taxon>Bacteria</taxon>
        <taxon>Pseudomonadati</taxon>
        <taxon>Campylobacterota</taxon>
        <taxon>Epsilonproteobacteria</taxon>
        <taxon>Campylobacterales</taxon>
        <taxon>Campylobacteraceae</taxon>
        <taxon>Campylobacter</taxon>
    </lineage>
</organism>
<comment type="function">
    <text evidence="1">This protein binds specifically to 23S rRNA; its binding is stimulated by other ribosomal proteins, e.g. L4, L17, and L20. It is important during the early stages of 50S assembly. It makes multiple contacts with different domains of the 23S rRNA in the assembled 50S subunit and ribosome (By similarity).</text>
</comment>
<comment type="function">
    <text evidence="1">The globular domain of the protein is located near the polypeptide exit tunnel on the outside of the subunit, while an extended beta-hairpin is found that lines the wall of the exit tunnel in the center of the 70S ribosome.</text>
</comment>
<comment type="subunit">
    <text evidence="1">Part of the 50S ribosomal subunit.</text>
</comment>
<comment type="similarity">
    <text evidence="1">Belongs to the universal ribosomal protein uL22 family.</text>
</comment>
<feature type="chain" id="PRO_1000052553" description="Large ribosomal subunit protein uL22">
    <location>
        <begin position="1"/>
        <end position="110"/>
    </location>
</feature>
<feature type="region of interest" description="Disordered" evidence="2">
    <location>
        <begin position="85"/>
        <end position="110"/>
    </location>
</feature>
<feature type="compositionally biased region" description="Basic residues" evidence="2">
    <location>
        <begin position="85"/>
        <end position="95"/>
    </location>
</feature>
<name>RL22_CAMC5</name>
<proteinExistence type="inferred from homology"/>
<protein>
    <recommendedName>
        <fullName evidence="1">Large ribosomal subunit protein uL22</fullName>
    </recommendedName>
    <alternativeName>
        <fullName evidence="3">50S ribosomal protein L22</fullName>
    </alternativeName>
</protein>
<gene>
    <name evidence="1" type="primary">rplV</name>
    <name type="ordered locus">Ccur92_18450</name>
    <name type="ORF">CCV52592_1028</name>
</gene>
<keyword id="KW-1185">Reference proteome</keyword>
<keyword id="KW-0687">Ribonucleoprotein</keyword>
<keyword id="KW-0689">Ribosomal protein</keyword>
<keyword id="KW-0694">RNA-binding</keyword>
<keyword id="KW-0699">rRNA-binding</keyword>